<protein>
    <recommendedName>
        <fullName>Uric acid transporter UacT</fullName>
    </recommendedName>
</protein>
<organism>
    <name type="scientific">Escherichia coli (strain K12)</name>
    <dbReference type="NCBI Taxonomy" id="83333"/>
    <lineage>
        <taxon>Bacteria</taxon>
        <taxon>Pseudomonadati</taxon>
        <taxon>Pseudomonadota</taxon>
        <taxon>Gammaproteobacteria</taxon>
        <taxon>Enterobacterales</taxon>
        <taxon>Enterobacteriaceae</taxon>
        <taxon>Escherichia</taxon>
    </lineage>
</organism>
<name>UACT_ECOLI</name>
<feature type="chain" id="PRO_0000165968" description="Uric acid transporter UacT">
    <location>
        <begin position="1"/>
        <end position="482"/>
    </location>
</feature>
<feature type="topological domain" description="Cytoplasmic" evidence="1">
    <location>
        <begin position="1"/>
        <end position="29"/>
    </location>
</feature>
<feature type="transmembrane region" description="Helical" evidence="1">
    <location>
        <begin position="30"/>
        <end position="50"/>
    </location>
</feature>
<feature type="topological domain" description="Periplasmic" evidence="1">
    <location>
        <begin position="51"/>
        <end position="62"/>
    </location>
</feature>
<feature type="transmembrane region" description="Helical" evidence="1">
    <location>
        <begin position="63"/>
        <end position="83"/>
    </location>
</feature>
<feature type="topological domain" description="Cytoplasmic" evidence="1">
    <location>
        <begin position="84"/>
        <end position="92"/>
    </location>
</feature>
<feature type="transmembrane region" description="Helical" evidence="1">
    <location>
        <begin position="93"/>
        <end position="113"/>
    </location>
</feature>
<feature type="topological domain" description="Periplasmic" evidence="1">
    <location>
        <begin position="114"/>
        <end position="115"/>
    </location>
</feature>
<feature type="transmembrane region" description="Helical" evidence="1">
    <location>
        <begin position="116"/>
        <end position="136"/>
    </location>
</feature>
<feature type="topological domain" description="Cytoplasmic" evidence="1">
    <location>
        <begin position="137"/>
        <end position="142"/>
    </location>
</feature>
<feature type="transmembrane region" description="Helical" evidence="1">
    <location>
        <begin position="143"/>
        <end position="163"/>
    </location>
</feature>
<feature type="topological domain" description="Periplasmic" evidence="1">
    <location>
        <begin position="164"/>
        <end position="178"/>
    </location>
</feature>
<feature type="transmembrane region" description="Helical" evidence="1">
    <location>
        <begin position="179"/>
        <end position="199"/>
    </location>
</feature>
<feature type="topological domain" description="Cytoplasmic" evidence="1">
    <location>
        <begin position="200"/>
        <end position="204"/>
    </location>
</feature>
<feature type="transmembrane region" description="Helical" evidence="1">
    <location>
        <begin position="205"/>
        <end position="225"/>
    </location>
</feature>
<feature type="topological domain" description="Periplasmic" evidence="1">
    <location>
        <begin position="226"/>
        <end position="261"/>
    </location>
</feature>
<feature type="transmembrane region" description="Helical" evidence="1">
    <location>
        <begin position="262"/>
        <end position="282"/>
    </location>
</feature>
<feature type="topological domain" description="Cytoplasmic" evidence="1">
    <location>
        <begin position="283"/>
        <end position="337"/>
    </location>
</feature>
<feature type="transmembrane region" description="Helical" evidence="1">
    <location>
        <begin position="338"/>
        <end position="358"/>
    </location>
</feature>
<feature type="topological domain" description="Periplasmic" evidence="1">
    <location>
        <position position="359"/>
    </location>
</feature>
<feature type="transmembrane region" description="Helical" evidence="1">
    <location>
        <begin position="360"/>
        <end position="380"/>
    </location>
</feature>
<feature type="topological domain" description="Cytoplasmic" evidence="1">
    <location>
        <begin position="381"/>
        <end position="392"/>
    </location>
</feature>
<feature type="transmembrane region" description="Helical" evidence="1">
    <location>
        <begin position="393"/>
        <end position="413"/>
    </location>
</feature>
<feature type="topological domain" description="Periplasmic" evidence="1">
    <location>
        <begin position="414"/>
        <end position="421"/>
    </location>
</feature>
<feature type="transmembrane region" description="Helical" evidence="1">
    <location>
        <begin position="422"/>
        <end position="442"/>
    </location>
</feature>
<feature type="topological domain" description="Cytoplasmic" evidence="1">
    <location>
        <begin position="443"/>
        <end position="482"/>
    </location>
</feature>
<feature type="mutagenesis site" description="Lack of activity." evidence="2">
    <original>H</original>
    <variation>K</variation>
    <variation>L</variation>
    <location>
        <position position="37"/>
    </location>
</feature>
<feature type="mutagenesis site" description="Strong decrease in activity." evidence="2">
    <original>H</original>
    <variation>N</variation>
    <location>
        <position position="37"/>
    </location>
</feature>
<feature type="mutagenesis site" description="Decrease in activity with uric acid. Highly active with xanthine." evidence="2">
    <original>T</original>
    <variation>A</variation>
    <location>
        <position position="100"/>
    </location>
</feature>
<feature type="mutagenesis site" description="Decrease in activity." evidence="2">
    <original>T</original>
    <variation>S</variation>
    <location>
        <position position="100"/>
    </location>
</feature>
<feature type="mutagenesis site" description="Almost no change in activity." evidence="2">
    <original>S</original>
    <variation>Q</variation>
    <location>
        <position position="256"/>
    </location>
</feature>
<feature type="mutagenesis site" description="Almost no change in activity." evidence="2">
    <original>T</original>
    <variation>V</variation>
    <location>
        <position position="259"/>
    </location>
</feature>
<feature type="mutagenesis site" description="Lack of activity." evidence="2">
    <original>E</original>
    <variation>D</variation>
    <variation>N</variation>
    <variation>Q</variation>
    <location>
        <position position="270"/>
    </location>
</feature>
<feature type="mutagenesis site" description="Almost no change in activity." evidence="2">
    <original>L</original>
    <variation>T</variation>
    <location>
        <position position="278"/>
    </location>
</feature>
<feature type="mutagenesis site" description="Strong decrease in activity." evidence="2">
    <original>D</original>
    <variation>E</variation>
    <location>
        <position position="298"/>
    </location>
</feature>
<feature type="mutagenesis site" description="Lack of activity." evidence="2">
    <original>D</original>
    <variation>N</variation>
    <location>
        <position position="298"/>
    </location>
</feature>
<feature type="mutagenesis site" description="Decrease in activity." evidence="2">
    <original>S</original>
    <variation>A</variation>
    <location>
        <position position="317"/>
    </location>
</feature>
<feature type="mutagenesis site" description="Strong decrease in activity." evidence="2">
    <original>Q</original>
    <variation>E</variation>
    <variation>N</variation>
    <location>
        <position position="318"/>
    </location>
</feature>
<feature type="mutagenesis site" description="Lack of activity." evidence="2">
    <original>N</original>
    <variation>D</variation>
    <variation>Q</variation>
    <location>
        <position position="319"/>
    </location>
</feature>
<feature type="mutagenesis site" description="Lack of activity." evidence="2">
    <original>V</original>
    <variation>N</variation>
    <location>
        <position position="320"/>
    </location>
</feature>
<feature type="mutagenesis site" description="Almost no change in activity." evidence="2">
    <original>R</original>
    <variation>G</variation>
    <location>
        <position position="327"/>
    </location>
</feature>
<feature type="mutagenesis site" description="Almost no change in activity." evidence="2">
    <original>S</original>
    <variation>N</variation>
    <location>
        <position position="426"/>
    </location>
</feature>
<dbReference type="EMBL" id="U28375">
    <property type="protein sequence ID" value="AAA83069.1"/>
    <property type="status" value="ALT_INIT"/>
    <property type="molecule type" value="Genomic_DNA"/>
</dbReference>
<dbReference type="EMBL" id="U00096">
    <property type="protein sequence ID" value="AAC75926.2"/>
    <property type="molecule type" value="Genomic_DNA"/>
</dbReference>
<dbReference type="EMBL" id="AP009048">
    <property type="protein sequence ID" value="BAE76953.1"/>
    <property type="molecule type" value="Genomic_DNA"/>
</dbReference>
<dbReference type="PIR" id="H65072">
    <property type="entry name" value="H65072"/>
</dbReference>
<dbReference type="RefSeq" id="NP_417364.2">
    <property type="nucleotide sequence ID" value="NC_000913.3"/>
</dbReference>
<dbReference type="RefSeq" id="WP_001295374.1">
    <property type="nucleotide sequence ID" value="NZ_SSZK01000003.1"/>
</dbReference>
<dbReference type="SMR" id="Q46821"/>
<dbReference type="BioGRID" id="4262336">
    <property type="interactions" value="163"/>
</dbReference>
<dbReference type="DIP" id="DIP-12176N"/>
<dbReference type="FunCoup" id="Q46821">
    <property type="interactions" value="138"/>
</dbReference>
<dbReference type="STRING" id="511145.b2888"/>
<dbReference type="TCDB" id="2.A.40.3.3">
    <property type="family name" value="the nucleobase/ascorbate transporter (nat) or nucleobase:cation symporter-2 (ncs2) family"/>
</dbReference>
<dbReference type="PaxDb" id="511145-b2888"/>
<dbReference type="DNASU" id="949017"/>
<dbReference type="EnsemblBacteria" id="AAC75926">
    <property type="protein sequence ID" value="AAC75926"/>
    <property type="gene ID" value="b2888"/>
</dbReference>
<dbReference type="GeneID" id="75205276"/>
<dbReference type="GeneID" id="949017"/>
<dbReference type="KEGG" id="ecj:JW5470"/>
<dbReference type="KEGG" id="eco:b2888"/>
<dbReference type="KEGG" id="ecoc:C3026_15835"/>
<dbReference type="PATRIC" id="fig|1411691.4.peg.3847"/>
<dbReference type="EchoBASE" id="EB2882"/>
<dbReference type="eggNOG" id="COG2233">
    <property type="taxonomic scope" value="Bacteria"/>
</dbReference>
<dbReference type="HOGENOM" id="CLU_017959_8_2_6"/>
<dbReference type="InParanoid" id="Q46821"/>
<dbReference type="OMA" id="MVVSMTE"/>
<dbReference type="OrthoDB" id="9805749at2"/>
<dbReference type="PhylomeDB" id="Q46821"/>
<dbReference type="BioCyc" id="EcoCyc:YGFU-MONOMER"/>
<dbReference type="BioCyc" id="MetaCyc:YGFU-MONOMER"/>
<dbReference type="PRO" id="PR:Q46821"/>
<dbReference type="Proteomes" id="UP000000625">
    <property type="component" value="Chromosome"/>
</dbReference>
<dbReference type="GO" id="GO:0005886">
    <property type="term" value="C:plasma membrane"/>
    <property type="evidence" value="ECO:0000314"/>
    <property type="project" value="EcoCyc"/>
</dbReference>
<dbReference type="GO" id="GO:0015293">
    <property type="term" value="F:symporter activity"/>
    <property type="evidence" value="ECO:0007669"/>
    <property type="project" value="UniProtKB-KW"/>
</dbReference>
<dbReference type="GO" id="GO:0015143">
    <property type="term" value="F:urate transmembrane transporter activity"/>
    <property type="evidence" value="ECO:0000315"/>
    <property type="project" value="EcoCyc"/>
</dbReference>
<dbReference type="GO" id="GO:0042907">
    <property type="term" value="F:xanthine transmembrane transporter activity"/>
    <property type="evidence" value="ECO:0000315"/>
    <property type="project" value="EcoCyc"/>
</dbReference>
<dbReference type="GO" id="GO:1902600">
    <property type="term" value="P:proton transmembrane transport"/>
    <property type="evidence" value="ECO:0007669"/>
    <property type="project" value="UniProtKB-KW"/>
</dbReference>
<dbReference type="GO" id="GO:0015747">
    <property type="term" value="P:urate transport"/>
    <property type="evidence" value="ECO:0000315"/>
    <property type="project" value="EcoCyc"/>
</dbReference>
<dbReference type="GO" id="GO:0042906">
    <property type="term" value="P:xanthine transport"/>
    <property type="evidence" value="ECO:0000315"/>
    <property type="project" value="EcoCyc"/>
</dbReference>
<dbReference type="InterPro" id="IPR006043">
    <property type="entry name" value="NCS2"/>
</dbReference>
<dbReference type="InterPro" id="IPR017588">
    <property type="entry name" value="UacT-like"/>
</dbReference>
<dbReference type="InterPro" id="IPR006042">
    <property type="entry name" value="Xan_ur_permease"/>
</dbReference>
<dbReference type="NCBIfam" id="TIGR00801">
    <property type="entry name" value="ncs2"/>
    <property type="match status" value="1"/>
</dbReference>
<dbReference type="NCBIfam" id="NF037981">
    <property type="entry name" value="NCS2_1"/>
    <property type="match status" value="1"/>
</dbReference>
<dbReference type="NCBIfam" id="TIGR03173">
    <property type="entry name" value="pbuX"/>
    <property type="match status" value="1"/>
</dbReference>
<dbReference type="PANTHER" id="PTHR42810">
    <property type="entry name" value="PURINE PERMEASE C1399.01C-RELATED"/>
    <property type="match status" value="1"/>
</dbReference>
<dbReference type="PANTHER" id="PTHR42810:SF4">
    <property type="entry name" value="URIC ACID TRANSPORTER UACT"/>
    <property type="match status" value="1"/>
</dbReference>
<dbReference type="Pfam" id="PF00860">
    <property type="entry name" value="Xan_ur_permease"/>
    <property type="match status" value="1"/>
</dbReference>
<dbReference type="PROSITE" id="PS01116">
    <property type="entry name" value="XANTH_URACIL_PERMASE"/>
    <property type="match status" value="1"/>
</dbReference>
<comment type="function">
    <text evidence="2">Proton-dependent high-capacity transporter for uric acid. Also shows a low capacity for transport of xanthine at 37 degrees Celsius but not at 25 degrees Celsius.</text>
</comment>
<comment type="activity regulation">
    <text evidence="2">Inhibited in the presence of the protonophore carbonyl cyanide m-chlorophenyl hydrazone.</text>
</comment>
<comment type="biophysicochemical properties">
    <kinetics>
        <KM evidence="2">0.5 mM for uric acid</KM>
        <KM evidence="2">0.3 mM for xanthine</KM>
        <Vmax evidence="2">715.0 nmol/min/mg enzyme with acid uric as substrate</Vmax>
        <Vmax evidence="2">14.0 nmol/min/mg enzyme with xanthine as substrate (at 37 degrees Celsius)</Vmax>
    </kinetics>
</comment>
<comment type="subcellular location">
    <subcellularLocation>
        <location evidence="2">Cell inner membrane</location>
        <topology evidence="2">Multi-pass membrane protein</topology>
    </subcellularLocation>
</comment>
<comment type="similarity">
    <text evidence="3">Belongs to the nucleobase:cation symporter-2 (NCS2) (TC 2.A.40) family.</text>
</comment>
<comment type="sequence caution" evidence="3">
    <conflict type="erroneous initiation">
        <sequence resource="EMBL-CDS" id="AAA83069"/>
    </conflict>
    <text>Extended N-terminus.</text>
</comment>
<proteinExistence type="evidence at protein level"/>
<gene>
    <name type="primary">uacT</name>
    <name type="synonym">ygfU</name>
    <name type="ordered locus">b2888</name>
    <name type="ordered locus">JW5470</name>
</gene>
<keyword id="KW-0997">Cell inner membrane</keyword>
<keyword id="KW-1003">Cell membrane</keyword>
<keyword id="KW-0375">Hydrogen ion transport</keyword>
<keyword id="KW-0406">Ion transport</keyword>
<keyword id="KW-0472">Membrane</keyword>
<keyword id="KW-1185">Reference proteome</keyword>
<keyword id="KW-0769">Symport</keyword>
<keyword id="KW-0812">Transmembrane</keyword>
<keyword id="KW-1133">Transmembrane helix</keyword>
<keyword id="KW-0813">Transport</keyword>
<reference key="1">
    <citation type="journal article" date="1997" name="Science">
        <title>The complete genome sequence of Escherichia coli K-12.</title>
        <authorList>
            <person name="Blattner F.R."/>
            <person name="Plunkett G. III"/>
            <person name="Bloch C.A."/>
            <person name="Perna N.T."/>
            <person name="Burland V."/>
            <person name="Riley M."/>
            <person name="Collado-Vides J."/>
            <person name="Glasner J.D."/>
            <person name="Rode C.K."/>
            <person name="Mayhew G.F."/>
            <person name="Gregor J."/>
            <person name="Davis N.W."/>
            <person name="Kirkpatrick H.A."/>
            <person name="Goeden M.A."/>
            <person name="Rose D.J."/>
            <person name="Mau B."/>
            <person name="Shao Y."/>
        </authorList>
    </citation>
    <scope>NUCLEOTIDE SEQUENCE [LARGE SCALE GENOMIC DNA]</scope>
    <source>
        <strain>K12 / MG1655 / ATCC 47076</strain>
    </source>
</reference>
<reference key="2">
    <citation type="journal article" date="2006" name="Mol. Syst. Biol.">
        <title>Highly accurate genome sequences of Escherichia coli K-12 strains MG1655 and W3110.</title>
        <authorList>
            <person name="Hayashi K."/>
            <person name="Morooka N."/>
            <person name="Yamamoto Y."/>
            <person name="Fujita K."/>
            <person name="Isono K."/>
            <person name="Choi S."/>
            <person name="Ohtsubo E."/>
            <person name="Baba T."/>
            <person name="Wanner B.L."/>
            <person name="Mori H."/>
            <person name="Horiuchi T."/>
        </authorList>
    </citation>
    <scope>NUCLEOTIDE SEQUENCE [LARGE SCALE GENOMIC DNA]</scope>
    <source>
        <strain>K12 / W3110 / ATCC 27325 / DSM 5911</strain>
    </source>
</reference>
<reference key="3">
    <citation type="journal article" date="2005" name="Science">
        <title>Global topology analysis of the Escherichia coli inner membrane proteome.</title>
        <authorList>
            <person name="Daley D.O."/>
            <person name="Rapp M."/>
            <person name="Granseth E."/>
            <person name="Melen K."/>
            <person name="Drew D."/>
            <person name="von Heijne G."/>
        </authorList>
    </citation>
    <scope>TOPOLOGY [LARGE SCALE ANALYSIS]</scope>
    <source>
        <strain>K12 / MG1655 / ATCC 47076</strain>
    </source>
</reference>
<reference key="4">
    <citation type="journal article" date="2012" name="J. Biol. Chem.">
        <title>Substrate selectivity of YgfU, a uric acid transporter from Escherichia coli.</title>
        <authorList>
            <person name="Papakostas K."/>
            <person name="Frillingos S."/>
        </authorList>
    </citation>
    <scope>FUNCTION</scope>
    <scope>ACTIVITY REGULATION</scope>
    <scope>BIOPHYSICOCHEMICAL PROPERTIES</scope>
    <scope>SUBCELLULAR LOCATION</scope>
    <scope>GENE NAME</scope>
    <scope>MUTAGENESIS OF HIS-37; THR-100; SER-256; THR-259; GLU-270; LEU-278; ASP-298; SER-317; GLN-318; ASN-319; VAL-320; ARG-327 AND SER-426</scope>
    <source>
        <strain>K12</strain>
    </source>
</reference>
<evidence type="ECO:0000255" key="1"/>
<evidence type="ECO:0000269" key="2">
    <source>
    </source>
</evidence>
<evidence type="ECO:0000305" key="3"/>
<sequence>MSAIDSQLPSSSGQDRPTDEVDRILSPGKLIILGLQHVLVMYAGAVAVPLMIGDRLGLSKEAIAMLISSDLFCCGIVTLLQCIGIGRFMGIRLPVIMSVTFAAVTPMIAIGMNPDIGLLGIFGATIAAGFITTLLAPLIGRLMPLFPPLVTGVVITSIGLSIIQVGIDWAAGGKGNPQYGNPVYLGISFAVLIFILLITRYAKGFMSNVAVLLGIVFGFLLSWMMNEVNLSGLHDASWFAIVTPMSFGMPIFDPVSILTMTAVLIIVFIESMGMFLALGEIVGRKLSSHDIIRGLRVDGVGTMIGGTFNSFPHTSFSQNVGLVSVTRVHSRWVCISSGIILILFGMVPKMAVLVASIPQFVLGGAGLVMFGMVLATGIRILSRCNYTTNRYNLYIVAISLGVGMTPTLSHDFFSKLPAVLQPLLHSGIMLATLSAVVLNVFFNGYQHHADLVKESVSDKDLKVRTVRMWLLMRKLKKNEHGE</sequence>
<accession>Q46821</accession>
<accession>Q2M9V3</accession>